<evidence type="ECO:0000255" key="1">
    <source>
        <dbReference type="HAMAP-Rule" id="MF_01007"/>
    </source>
</evidence>
<evidence type="ECO:0000256" key="2">
    <source>
        <dbReference type="SAM" id="MobiDB-lite"/>
    </source>
</evidence>
<reference key="1">
    <citation type="submission" date="2008-12" db="EMBL/GenBank/DDBJ databases">
        <title>Complete sequence of chromosome of Methylobacterium chloromethanicum CM4.</title>
        <authorList>
            <consortium name="US DOE Joint Genome Institute"/>
            <person name="Lucas S."/>
            <person name="Copeland A."/>
            <person name="Lapidus A."/>
            <person name="Glavina del Rio T."/>
            <person name="Dalin E."/>
            <person name="Tice H."/>
            <person name="Bruce D."/>
            <person name="Goodwin L."/>
            <person name="Pitluck S."/>
            <person name="Chertkov O."/>
            <person name="Brettin T."/>
            <person name="Detter J.C."/>
            <person name="Han C."/>
            <person name="Larimer F."/>
            <person name="Land M."/>
            <person name="Hauser L."/>
            <person name="Kyrpides N."/>
            <person name="Mikhailova N."/>
            <person name="Marx C."/>
            <person name="Richardson P."/>
        </authorList>
    </citation>
    <scope>NUCLEOTIDE SEQUENCE [LARGE SCALE GENOMIC DNA]</scope>
    <source>
        <strain>CM4 / NCIMB 13688</strain>
    </source>
</reference>
<gene>
    <name evidence="1" type="primary">rsmH</name>
    <name type="synonym">mraW</name>
    <name type="ordered locus">Mchl_5104</name>
</gene>
<feature type="chain" id="PRO_0000386973" description="Ribosomal RNA small subunit methyltransferase H">
    <location>
        <begin position="1"/>
        <end position="353"/>
    </location>
</feature>
<feature type="region of interest" description="Disordered" evidence="2">
    <location>
        <begin position="276"/>
        <end position="353"/>
    </location>
</feature>
<feature type="binding site" evidence="1">
    <location>
        <begin position="50"/>
        <end position="52"/>
    </location>
    <ligand>
        <name>S-adenosyl-L-methionine</name>
        <dbReference type="ChEBI" id="CHEBI:59789"/>
    </ligand>
</feature>
<feature type="binding site" evidence="1">
    <location>
        <position position="69"/>
    </location>
    <ligand>
        <name>S-adenosyl-L-methionine</name>
        <dbReference type="ChEBI" id="CHEBI:59789"/>
    </ligand>
</feature>
<feature type="binding site" evidence="1">
    <location>
        <position position="96"/>
    </location>
    <ligand>
        <name>S-adenosyl-L-methionine</name>
        <dbReference type="ChEBI" id="CHEBI:59789"/>
    </ligand>
</feature>
<feature type="binding site" evidence="1">
    <location>
        <position position="117"/>
    </location>
    <ligand>
        <name>S-adenosyl-L-methionine</name>
        <dbReference type="ChEBI" id="CHEBI:59789"/>
    </ligand>
</feature>
<feature type="binding site" evidence="1">
    <location>
        <position position="124"/>
    </location>
    <ligand>
        <name>S-adenosyl-L-methionine</name>
        <dbReference type="ChEBI" id="CHEBI:59789"/>
    </ligand>
</feature>
<proteinExistence type="inferred from homology"/>
<protein>
    <recommendedName>
        <fullName evidence="1">Ribosomal RNA small subunit methyltransferase H</fullName>
        <ecNumber evidence="1">2.1.1.199</ecNumber>
    </recommendedName>
    <alternativeName>
        <fullName evidence="1">16S rRNA m(4)C1402 methyltransferase</fullName>
    </alternativeName>
    <alternativeName>
        <fullName evidence="1">rRNA (cytosine-N(4)-)-methyltransferase RsmH</fullName>
    </alternativeName>
</protein>
<name>RSMH_METC4</name>
<keyword id="KW-0963">Cytoplasm</keyword>
<keyword id="KW-0489">Methyltransferase</keyword>
<keyword id="KW-0698">rRNA processing</keyword>
<keyword id="KW-0949">S-adenosyl-L-methionine</keyword>
<keyword id="KW-0808">Transferase</keyword>
<accession>B7KU77</accession>
<dbReference type="EC" id="2.1.1.199" evidence="1"/>
<dbReference type="EMBL" id="CP001298">
    <property type="protein sequence ID" value="ACK85868.1"/>
    <property type="molecule type" value="Genomic_DNA"/>
</dbReference>
<dbReference type="SMR" id="B7KU77"/>
<dbReference type="KEGG" id="mch:Mchl_5104"/>
<dbReference type="HOGENOM" id="CLU_038422_1_1_5"/>
<dbReference type="Proteomes" id="UP000002385">
    <property type="component" value="Chromosome"/>
</dbReference>
<dbReference type="GO" id="GO:0005737">
    <property type="term" value="C:cytoplasm"/>
    <property type="evidence" value="ECO:0007669"/>
    <property type="project" value="UniProtKB-SubCell"/>
</dbReference>
<dbReference type="GO" id="GO:0071424">
    <property type="term" value="F:rRNA (cytosine-N4-)-methyltransferase activity"/>
    <property type="evidence" value="ECO:0007669"/>
    <property type="project" value="UniProtKB-UniRule"/>
</dbReference>
<dbReference type="GO" id="GO:0070475">
    <property type="term" value="P:rRNA base methylation"/>
    <property type="evidence" value="ECO:0007669"/>
    <property type="project" value="UniProtKB-UniRule"/>
</dbReference>
<dbReference type="Gene3D" id="1.10.150.170">
    <property type="entry name" value="Putative methyltransferase TM0872, insert domain"/>
    <property type="match status" value="1"/>
</dbReference>
<dbReference type="Gene3D" id="3.40.50.150">
    <property type="entry name" value="Vaccinia Virus protein VP39"/>
    <property type="match status" value="1"/>
</dbReference>
<dbReference type="HAMAP" id="MF_01007">
    <property type="entry name" value="16SrRNA_methyltr_H"/>
    <property type="match status" value="1"/>
</dbReference>
<dbReference type="InterPro" id="IPR002903">
    <property type="entry name" value="RsmH"/>
</dbReference>
<dbReference type="InterPro" id="IPR023397">
    <property type="entry name" value="SAM-dep_MeTrfase_MraW_recog"/>
</dbReference>
<dbReference type="InterPro" id="IPR029063">
    <property type="entry name" value="SAM-dependent_MTases_sf"/>
</dbReference>
<dbReference type="NCBIfam" id="TIGR00006">
    <property type="entry name" value="16S rRNA (cytosine(1402)-N(4))-methyltransferase RsmH"/>
    <property type="match status" value="1"/>
</dbReference>
<dbReference type="PANTHER" id="PTHR11265:SF0">
    <property type="entry name" value="12S RRNA N4-METHYLCYTIDINE METHYLTRANSFERASE"/>
    <property type="match status" value="1"/>
</dbReference>
<dbReference type="PANTHER" id="PTHR11265">
    <property type="entry name" value="S-ADENOSYL-METHYLTRANSFERASE MRAW"/>
    <property type="match status" value="1"/>
</dbReference>
<dbReference type="Pfam" id="PF01795">
    <property type="entry name" value="Methyltransf_5"/>
    <property type="match status" value="1"/>
</dbReference>
<dbReference type="PIRSF" id="PIRSF004486">
    <property type="entry name" value="MraW"/>
    <property type="match status" value="1"/>
</dbReference>
<dbReference type="SUPFAM" id="SSF81799">
    <property type="entry name" value="Putative methyltransferase TM0872, insert domain"/>
    <property type="match status" value="1"/>
</dbReference>
<dbReference type="SUPFAM" id="SSF53335">
    <property type="entry name" value="S-adenosyl-L-methionine-dependent methyltransferases"/>
    <property type="match status" value="1"/>
</dbReference>
<sequence>MPMSRAPRTARAELPKGAQARHVPVLLAEVLAALSLDRPGLAVDGTFGAGGYTRALLEAGPEVRVIAIDRDPTAIRGGADLVNAFGGRLRLVQGRFGELDTLIADQNEAQADWVVLDIGVSSMQIDEAQRGFSFRQDGPLDMRMGGEGPSAADLVNGEEETTLADILYHFGEERRSRAVARAIVEARRRAPIVTTAQLADLVAGVVRPEPGSPIHPATRSFQGLRIAVNDELGELVRGLHAAERVLKPGGRLAVVTFHSLEDRIVKQFFSARSGRAAQASRHVPGVERPAPKSFKLVTKGPVLPSEAETDVNPRSRSAKLRAGERTDAPAPPPLSAIETLASLPAPQGRGPRR</sequence>
<comment type="function">
    <text evidence="1">Specifically methylates the N4 position of cytidine in position 1402 (C1402) of 16S rRNA.</text>
</comment>
<comment type="catalytic activity">
    <reaction evidence="1">
        <text>cytidine(1402) in 16S rRNA + S-adenosyl-L-methionine = N(4)-methylcytidine(1402) in 16S rRNA + S-adenosyl-L-homocysteine + H(+)</text>
        <dbReference type="Rhea" id="RHEA:42928"/>
        <dbReference type="Rhea" id="RHEA-COMP:10286"/>
        <dbReference type="Rhea" id="RHEA-COMP:10287"/>
        <dbReference type="ChEBI" id="CHEBI:15378"/>
        <dbReference type="ChEBI" id="CHEBI:57856"/>
        <dbReference type="ChEBI" id="CHEBI:59789"/>
        <dbReference type="ChEBI" id="CHEBI:74506"/>
        <dbReference type="ChEBI" id="CHEBI:82748"/>
        <dbReference type="EC" id="2.1.1.199"/>
    </reaction>
</comment>
<comment type="subcellular location">
    <subcellularLocation>
        <location evidence="1">Cytoplasm</location>
    </subcellularLocation>
</comment>
<comment type="similarity">
    <text evidence="1">Belongs to the methyltransferase superfamily. RsmH family.</text>
</comment>
<organism>
    <name type="scientific">Methylorubrum extorquens (strain CM4 / NCIMB 13688)</name>
    <name type="common">Methylobacterium extorquens</name>
    <dbReference type="NCBI Taxonomy" id="440085"/>
    <lineage>
        <taxon>Bacteria</taxon>
        <taxon>Pseudomonadati</taxon>
        <taxon>Pseudomonadota</taxon>
        <taxon>Alphaproteobacteria</taxon>
        <taxon>Hyphomicrobiales</taxon>
        <taxon>Methylobacteriaceae</taxon>
        <taxon>Methylorubrum</taxon>
    </lineage>
</organism>